<dbReference type="EC" id="2.4.2.1" evidence="2"/>
<dbReference type="EMBL" id="CP000800">
    <property type="protein sequence ID" value="ABV17365.1"/>
    <property type="molecule type" value="Genomic_DNA"/>
</dbReference>
<dbReference type="RefSeq" id="WP_000224877.1">
    <property type="nucleotide sequence ID" value="NC_009801.1"/>
</dbReference>
<dbReference type="SMR" id="A7ZVS7"/>
<dbReference type="GeneID" id="93777460"/>
<dbReference type="KEGG" id="ecw:EcE24377A_4983"/>
<dbReference type="HOGENOM" id="CLU_068457_2_0_6"/>
<dbReference type="Proteomes" id="UP000001122">
    <property type="component" value="Chromosome"/>
</dbReference>
<dbReference type="GO" id="GO:0005829">
    <property type="term" value="C:cytosol"/>
    <property type="evidence" value="ECO:0007669"/>
    <property type="project" value="TreeGrafter"/>
</dbReference>
<dbReference type="GO" id="GO:0004731">
    <property type="term" value="F:purine-nucleoside phosphorylase activity"/>
    <property type="evidence" value="ECO:0007669"/>
    <property type="project" value="UniProtKB-UniRule"/>
</dbReference>
<dbReference type="GO" id="GO:0006152">
    <property type="term" value="P:purine nucleoside catabolic process"/>
    <property type="evidence" value="ECO:0007669"/>
    <property type="project" value="TreeGrafter"/>
</dbReference>
<dbReference type="CDD" id="cd09006">
    <property type="entry name" value="PNP_EcPNPI-like"/>
    <property type="match status" value="1"/>
</dbReference>
<dbReference type="FunFam" id="3.40.50.1580:FF:000002">
    <property type="entry name" value="Purine nucleoside phosphorylase DeoD-type"/>
    <property type="match status" value="1"/>
</dbReference>
<dbReference type="Gene3D" id="3.40.50.1580">
    <property type="entry name" value="Nucleoside phosphorylase domain"/>
    <property type="match status" value="1"/>
</dbReference>
<dbReference type="HAMAP" id="MF_01627">
    <property type="entry name" value="Pur_nucleosid_phosp"/>
    <property type="match status" value="1"/>
</dbReference>
<dbReference type="InterPro" id="IPR004402">
    <property type="entry name" value="DeoD-type"/>
</dbReference>
<dbReference type="InterPro" id="IPR018016">
    <property type="entry name" value="Nucleoside_phosphorylase_CS"/>
</dbReference>
<dbReference type="InterPro" id="IPR000845">
    <property type="entry name" value="Nucleoside_phosphorylase_d"/>
</dbReference>
<dbReference type="InterPro" id="IPR035994">
    <property type="entry name" value="Nucleoside_phosphorylase_sf"/>
</dbReference>
<dbReference type="NCBIfam" id="TIGR00107">
    <property type="entry name" value="deoD"/>
    <property type="match status" value="1"/>
</dbReference>
<dbReference type="NCBIfam" id="NF004489">
    <property type="entry name" value="PRK05819.1"/>
    <property type="match status" value="1"/>
</dbReference>
<dbReference type="NCBIfam" id="NF009914">
    <property type="entry name" value="PRK13374.1"/>
    <property type="match status" value="1"/>
</dbReference>
<dbReference type="PANTHER" id="PTHR43691:SF2">
    <property type="entry name" value="PURINE NUCLEOSIDE PHOSPHORYLASE DEOD-TYPE"/>
    <property type="match status" value="1"/>
</dbReference>
<dbReference type="PANTHER" id="PTHR43691">
    <property type="entry name" value="URIDINE PHOSPHORYLASE"/>
    <property type="match status" value="1"/>
</dbReference>
<dbReference type="Pfam" id="PF01048">
    <property type="entry name" value="PNP_UDP_1"/>
    <property type="match status" value="1"/>
</dbReference>
<dbReference type="SUPFAM" id="SSF53167">
    <property type="entry name" value="Purine and uridine phosphorylases"/>
    <property type="match status" value="1"/>
</dbReference>
<dbReference type="PROSITE" id="PS01232">
    <property type="entry name" value="PNP_UDP_1"/>
    <property type="match status" value="1"/>
</dbReference>
<accession>A7ZVS7</accession>
<keyword id="KW-0007">Acetylation</keyword>
<keyword id="KW-0328">Glycosyltransferase</keyword>
<keyword id="KW-1185">Reference proteome</keyword>
<keyword id="KW-0808">Transferase</keyword>
<feature type="chain" id="PRO_1000069625" description="Purine nucleoside phosphorylase DeoD-type">
    <location>
        <begin position="1"/>
        <end position="239"/>
    </location>
</feature>
<feature type="active site" description="Proton donor" evidence="2">
    <location>
        <position position="205"/>
    </location>
</feature>
<feature type="binding site" evidence="1">
    <location>
        <position position="5"/>
    </location>
    <ligand>
        <name>a purine D-ribonucleoside</name>
        <dbReference type="ChEBI" id="CHEBI:142355"/>
        <note>ligand shared between dimeric partners</note>
    </ligand>
</feature>
<feature type="binding site" description="in other chain" evidence="1">
    <location>
        <position position="21"/>
    </location>
    <ligand>
        <name>phosphate</name>
        <dbReference type="ChEBI" id="CHEBI:43474"/>
        <note>ligand shared between dimeric partners</note>
    </ligand>
</feature>
<feature type="binding site" description="in other chain" evidence="1">
    <location>
        <position position="25"/>
    </location>
    <ligand>
        <name>phosphate</name>
        <dbReference type="ChEBI" id="CHEBI:43474"/>
        <note>ligand shared between dimeric partners</note>
    </ligand>
</feature>
<feature type="binding site" evidence="1">
    <location>
        <position position="44"/>
    </location>
    <ligand>
        <name>phosphate</name>
        <dbReference type="ChEBI" id="CHEBI:43474"/>
        <note>ligand shared between dimeric partners</note>
    </ligand>
</feature>
<feature type="binding site" description="in other chain" evidence="1">
    <location>
        <begin position="88"/>
        <end position="91"/>
    </location>
    <ligand>
        <name>phosphate</name>
        <dbReference type="ChEBI" id="CHEBI:43474"/>
        <note>ligand shared between dimeric partners</note>
    </ligand>
</feature>
<feature type="binding site" description="in other chain" evidence="1">
    <location>
        <begin position="180"/>
        <end position="182"/>
    </location>
    <ligand>
        <name>a purine D-ribonucleoside</name>
        <dbReference type="ChEBI" id="CHEBI:142355"/>
        <note>ligand shared between dimeric partners</note>
    </ligand>
</feature>
<feature type="binding site" description="in other chain" evidence="1">
    <location>
        <begin position="204"/>
        <end position="205"/>
    </location>
    <ligand>
        <name>a purine D-ribonucleoside</name>
        <dbReference type="ChEBI" id="CHEBI:142355"/>
        <note>ligand shared between dimeric partners</note>
    </ligand>
</feature>
<feature type="site" description="Important for catalytic activity" evidence="2">
    <location>
        <position position="218"/>
    </location>
</feature>
<feature type="modified residue" description="N6-acetyllysine" evidence="2">
    <location>
        <position position="27"/>
    </location>
</feature>
<protein>
    <recommendedName>
        <fullName evidence="2">Purine nucleoside phosphorylase DeoD-type</fullName>
        <shortName evidence="2">PNP</shortName>
        <ecNumber evidence="2">2.4.2.1</ecNumber>
    </recommendedName>
</protein>
<name>DEOD_ECO24</name>
<proteinExistence type="inferred from homology"/>
<evidence type="ECO:0000250" key="1">
    <source>
        <dbReference type="UniProtKB" id="P50389"/>
    </source>
</evidence>
<evidence type="ECO:0000255" key="2">
    <source>
        <dbReference type="HAMAP-Rule" id="MF_01627"/>
    </source>
</evidence>
<organism>
    <name type="scientific">Escherichia coli O139:H28 (strain E24377A / ETEC)</name>
    <dbReference type="NCBI Taxonomy" id="331111"/>
    <lineage>
        <taxon>Bacteria</taxon>
        <taxon>Pseudomonadati</taxon>
        <taxon>Pseudomonadota</taxon>
        <taxon>Gammaproteobacteria</taxon>
        <taxon>Enterobacterales</taxon>
        <taxon>Enterobacteriaceae</taxon>
        <taxon>Escherichia</taxon>
    </lineage>
</organism>
<gene>
    <name evidence="2" type="primary">deoD</name>
    <name type="ordered locus">EcE24377A_4983</name>
</gene>
<sequence length="239" mass="25950">MATPHINAEMGDFADVVLMPGDPLRAKYIAETFLEDAREVNNVRGMLGFTGTYKGRKISVMGHGMGIPSCSIYTKELITDFGVKKIIRVGSCGAVLPHVKLRDVVIGMGACTDSKVNRIRFKDHDFAAIADFDMVRNAVDAAKALGIDARVGNLFSADLFYSPDGEMFDVMEKYGILGVEMEAAGIYGVAAEFGAKALTICTVSDHIRTHEQTTAAERQTTFNDMIKIALESVLLGDKE</sequence>
<reference key="1">
    <citation type="journal article" date="2008" name="J. Bacteriol.">
        <title>The pangenome structure of Escherichia coli: comparative genomic analysis of E. coli commensal and pathogenic isolates.</title>
        <authorList>
            <person name="Rasko D.A."/>
            <person name="Rosovitz M.J."/>
            <person name="Myers G.S.A."/>
            <person name="Mongodin E.F."/>
            <person name="Fricke W.F."/>
            <person name="Gajer P."/>
            <person name="Crabtree J."/>
            <person name="Sebaihia M."/>
            <person name="Thomson N.R."/>
            <person name="Chaudhuri R."/>
            <person name="Henderson I.R."/>
            <person name="Sperandio V."/>
            <person name="Ravel J."/>
        </authorList>
    </citation>
    <scope>NUCLEOTIDE SEQUENCE [LARGE SCALE GENOMIC DNA]</scope>
    <source>
        <strain>E24377A / ETEC</strain>
    </source>
</reference>
<comment type="function">
    <text evidence="2">Catalyzes the reversible phosphorolytic breakdown of the N-glycosidic bond in the beta-(deoxy)ribonucleoside molecules, with the formation of the corresponding free purine bases and pentose-1-phosphate.</text>
</comment>
<comment type="catalytic activity">
    <reaction evidence="2">
        <text>a purine D-ribonucleoside + phosphate = a purine nucleobase + alpha-D-ribose 1-phosphate</text>
        <dbReference type="Rhea" id="RHEA:19805"/>
        <dbReference type="ChEBI" id="CHEBI:26386"/>
        <dbReference type="ChEBI" id="CHEBI:43474"/>
        <dbReference type="ChEBI" id="CHEBI:57720"/>
        <dbReference type="ChEBI" id="CHEBI:142355"/>
        <dbReference type="EC" id="2.4.2.1"/>
    </reaction>
</comment>
<comment type="catalytic activity">
    <reaction evidence="2">
        <text>a purine 2'-deoxy-D-ribonucleoside + phosphate = a purine nucleobase + 2-deoxy-alpha-D-ribose 1-phosphate</text>
        <dbReference type="Rhea" id="RHEA:36431"/>
        <dbReference type="ChEBI" id="CHEBI:26386"/>
        <dbReference type="ChEBI" id="CHEBI:43474"/>
        <dbReference type="ChEBI" id="CHEBI:57259"/>
        <dbReference type="ChEBI" id="CHEBI:142361"/>
        <dbReference type="EC" id="2.4.2.1"/>
    </reaction>
</comment>
<comment type="subunit">
    <text evidence="2">Homohexamer; trimer of homodimers.</text>
</comment>
<comment type="similarity">
    <text evidence="2">Belongs to the PNP/UDP phosphorylase family.</text>
</comment>